<comment type="function">
    <text evidence="1">Transfers an acetyl group from acetyl-CoA to L-homoserine, forming acetyl-L-homoserine.</text>
</comment>
<comment type="catalytic activity">
    <reaction evidence="1">
        <text>L-homoserine + acetyl-CoA = O-acetyl-L-homoserine + CoA</text>
        <dbReference type="Rhea" id="RHEA:13701"/>
        <dbReference type="ChEBI" id="CHEBI:57287"/>
        <dbReference type="ChEBI" id="CHEBI:57288"/>
        <dbReference type="ChEBI" id="CHEBI:57476"/>
        <dbReference type="ChEBI" id="CHEBI:57716"/>
        <dbReference type="EC" id="2.3.1.31"/>
    </reaction>
</comment>
<comment type="pathway">
    <text evidence="1">Amino-acid biosynthesis; L-methionine biosynthesis via de novo pathway; O-acetyl-L-homoserine from L-homoserine: step 1/1.</text>
</comment>
<comment type="subunit">
    <text evidence="1">Homodimer.</text>
</comment>
<comment type="subcellular location">
    <subcellularLocation>
        <location evidence="1">Cytoplasm</location>
    </subcellularLocation>
</comment>
<comment type="similarity">
    <text evidence="1">Belongs to the AB hydrolase superfamily. MetX family.</text>
</comment>
<evidence type="ECO:0000255" key="1">
    <source>
        <dbReference type="HAMAP-Rule" id="MF_00296"/>
    </source>
</evidence>
<protein>
    <recommendedName>
        <fullName evidence="1">Homoserine O-acetyltransferase</fullName>
        <shortName evidence="1">HAT</shortName>
        <ecNumber evidence="1">2.3.1.31</ecNumber>
    </recommendedName>
    <alternativeName>
        <fullName evidence="1">Homoserine transacetylase</fullName>
        <shortName evidence="1">HTA</shortName>
    </alternativeName>
</protein>
<accession>A5GC94</accession>
<organism>
    <name type="scientific">Geotalea uraniireducens (strain Rf4)</name>
    <name type="common">Geobacter uraniireducens</name>
    <dbReference type="NCBI Taxonomy" id="351605"/>
    <lineage>
        <taxon>Bacteria</taxon>
        <taxon>Pseudomonadati</taxon>
        <taxon>Thermodesulfobacteriota</taxon>
        <taxon>Desulfuromonadia</taxon>
        <taxon>Geobacterales</taxon>
        <taxon>Geobacteraceae</taxon>
        <taxon>Geotalea</taxon>
    </lineage>
</organism>
<dbReference type="EC" id="2.3.1.31" evidence="1"/>
<dbReference type="EMBL" id="CP000698">
    <property type="protein sequence ID" value="ABQ24795.1"/>
    <property type="molecule type" value="Genomic_DNA"/>
</dbReference>
<dbReference type="RefSeq" id="WP_011937520.1">
    <property type="nucleotide sequence ID" value="NC_009483.1"/>
</dbReference>
<dbReference type="SMR" id="A5GC94"/>
<dbReference type="STRING" id="351605.Gura_0583"/>
<dbReference type="ESTHER" id="geour-metx">
    <property type="family name" value="Homoserine_transacetylase"/>
</dbReference>
<dbReference type="KEGG" id="gur:Gura_0583"/>
<dbReference type="HOGENOM" id="CLU_028760_1_2_7"/>
<dbReference type="OrthoDB" id="9800754at2"/>
<dbReference type="UniPathway" id="UPA00051">
    <property type="reaction ID" value="UER00074"/>
</dbReference>
<dbReference type="Proteomes" id="UP000006695">
    <property type="component" value="Chromosome"/>
</dbReference>
<dbReference type="GO" id="GO:0005737">
    <property type="term" value="C:cytoplasm"/>
    <property type="evidence" value="ECO:0007669"/>
    <property type="project" value="UniProtKB-SubCell"/>
</dbReference>
<dbReference type="GO" id="GO:0004414">
    <property type="term" value="F:homoserine O-acetyltransferase activity"/>
    <property type="evidence" value="ECO:0007669"/>
    <property type="project" value="UniProtKB-UniRule"/>
</dbReference>
<dbReference type="GO" id="GO:0009092">
    <property type="term" value="P:homoserine metabolic process"/>
    <property type="evidence" value="ECO:0007669"/>
    <property type="project" value="TreeGrafter"/>
</dbReference>
<dbReference type="GO" id="GO:0009086">
    <property type="term" value="P:methionine biosynthetic process"/>
    <property type="evidence" value="ECO:0007669"/>
    <property type="project" value="UniProtKB-UniRule"/>
</dbReference>
<dbReference type="FunFam" id="1.10.1740.110:FF:000001">
    <property type="entry name" value="Homoserine O-acetyltransferase"/>
    <property type="match status" value="1"/>
</dbReference>
<dbReference type="Gene3D" id="1.10.1740.110">
    <property type="match status" value="1"/>
</dbReference>
<dbReference type="Gene3D" id="3.40.50.1820">
    <property type="entry name" value="alpha/beta hydrolase"/>
    <property type="match status" value="1"/>
</dbReference>
<dbReference type="HAMAP" id="MF_00296">
    <property type="entry name" value="MetX_acyltransf"/>
    <property type="match status" value="1"/>
</dbReference>
<dbReference type="InterPro" id="IPR000073">
    <property type="entry name" value="AB_hydrolase_1"/>
</dbReference>
<dbReference type="InterPro" id="IPR029058">
    <property type="entry name" value="AB_hydrolase_fold"/>
</dbReference>
<dbReference type="InterPro" id="IPR008220">
    <property type="entry name" value="HAT_MetX-like"/>
</dbReference>
<dbReference type="NCBIfam" id="TIGR01392">
    <property type="entry name" value="homoserO_Ac_trn"/>
    <property type="match status" value="1"/>
</dbReference>
<dbReference type="NCBIfam" id="NF001209">
    <property type="entry name" value="PRK00175.1"/>
    <property type="match status" value="1"/>
</dbReference>
<dbReference type="PANTHER" id="PTHR32268">
    <property type="entry name" value="HOMOSERINE O-ACETYLTRANSFERASE"/>
    <property type="match status" value="1"/>
</dbReference>
<dbReference type="PANTHER" id="PTHR32268:SF11">
    <property type="entry name" value="HOMOSERINE O-ACETYLTRANSFERASE"/>
    <property type="match status" value="1"/>
</dbReference>
<dbReference type="Pfam" id="PF00561">
    <property type="entry name" value="Abhydrolase_1"/>
    <property type="match status" value="1"/>
</dbReference>
<dbReference type="PIRSF" id="PIRSF000443">
    <property type="entry name" value="Homoser_Ac_trans"/>
    <property type="match status" value="1"/>
</dbReference>
<dbReference type="SUPFAM" id="SSF53474">
    <property type="entry name" value="alpha/beta-Hydrolases"/>
    <property type="match status" value="1"/>
</dbReference>
<gene>
    <name evidence="1" type="primary">metXA</name>
    <name type="ordered locus">Gura_0583</name>
</gene>
<keyword id="KW-0012">Acyltransferase</keyword>
<keyword id="KW-0028">Amino-acid biosynthesis</keyword>
<keyword id="KW-0963">Cytoplasm</keyword>
<keyword id="KW-0486">Methionine biosynthesis</keyword>
<keyword id="KW-1185">Reference proteome</keyword>
<keyword id="KW-0808">Transferase</keyword>
<name>METXA_GEOUR</name>
<proteinExistence type="inferred from homology"/>
<sequence>MTVGIVEEKSVTFDTELRLESGRILGPITLAYETYGELNAARSNAILVAHAWTGNAHLAGRYSENEQKPGWWNEIVGPGKLLDTDRYFIICANVIGSCFGSTGPASINPKTGKKYNLSFPVITVRDMVRAQQLLIDHLGIDRLFSVMGGSMGGMQALEWATQFPERIASAIVLATTPRPSAQAISLNAVARWAIFNDPTWKKGEYRKNPKDGLALARGIGHITFLSDESMTAKFGRRFSARDGQFDFFGRFEVERYLSYNGYNFVDRFDANSFLYLAKALDLYDVAWGYESLEEAFAQVAAPIQFFAFSSDWLYPPAQTEEMVTTLEKLGKPVEYHLITSAYGHDAFLLEHETFTPMVRAFLEKVKTAAK</sequence>
<reference key="1">
    <citation type="submission" date="2007-05" db="EMBL/GenBank/DDBJ databases">
        <title>Complete sequence of Geobacter uraniireducens Rf4.</title>
        <authorList>
            <consortium name="US DOE Joint Genome Institute"/>
            <person name="Copeland A."/>
            <person name="Lucas S."/>
            <person name="Lapidus A."/>
            <person name="Barry K."/>
            <person name="Detter J.C."/>
            <person name="Glavina del Rio T."/>
            <person name="Hammon N."/>
            <person name="Israni S."/>
            <person name="Dalin E."/>
            <person name="Tice H."/>
            <person name="Pitluck S."/>
            <person name="Chertkov O."/>
            <person name="Brettin T."/>
            <person name="Bruce D."/>
            <person name="Han C."/>
            <person name="Schmutz J."/>
            <person name="Larimer F."/>
            <person name="Land M."/>
            <person name="Hauser L."/>
            <person name="Kyrpides N."/>
            <person name="Mikhailova N."/>
            <person name="Shelobolina E."/>
            <person name="Aklujkar M."/>
            <person name="Lovley D."/>
            <person name="Richardson P."/>
        </authorList>
    </citation>
    <scope>NUCLEOTIDE SEQUENCE [LARGE SCALE GENOMIC DNA]</scope>
    <source>
        <strain>ATCC BAA-1134 / JCM 13001 / Rf4</strain>
    </source>
</reference>
<feature type="chain" id="PRO_1000078942" description="Homoserine O-acetyltransferase">
    <location>
        <begin position="1"/>
        <end position="370"/>
    </location>
</feature>
<feature type="domain" description="AB hydrolase-1" evidence="1">
    <location>
        <begin position="44"/>
        <end position="350"/>
    </location>
</feature>
<feature type="active site" description="Nucleophile" evidence="1">
    <location>
        <position position="150"/>
    </location>
</feature>
<feature type="active site" evidence="1">
    <location>
        <position position="311"/>
    </location>
</feature>
<feature type="active site" evidence="1">
    <location>
        <position position="344"/>
    </location>
</feature>
<feature type="binding site" evidence="1">
    <location>
        <position position="217"/>
    </location>
    <ligand>
        <name>substrate</name>
    </ligand>
</feature>
<feature type="binding site" evidence="1">
    <location>
        <position position="345"/>
    </location>
    <ligand>
        <name>substrate</name>
    </ligand>
</feature>